<sequence>MENKSARAKVQAFGGFLTAMVIPNIGAFIAWGFITALFIPTGWLPNEHFAKIVGPMITYLLPVMIGSTGGHLVGGKRGAVMGGIGTIGVIVGAEIPMFLGSMIMGPLGGLVIKYVDKALEKRIPAGFEMVINNFSLGIAGMLLCLLGFEVIGPAVLIANTFVKECIEALVHAGYLPLLSVINEPAKVLFLNNAIDQGVYYPLGMQQASVNGKSIFFMVASNPGPGLGLLLAFTLFGKGMSKRSAPGAMIIHFLGGIHELYFPYVLMKPLTIIAMIAGGMSGTWMFNLLDGGLVAGPSPGSIFAYLALTPKGSFLATIAGVTVGTLVSFAITSLILKMEKTVETESEDEFAQSANAVKAMKQEGAFSLSRVKRIAFVCDAGMGSSAMGATTFRKRLEKAGLAIEVKHYAIENVPADADIVVTHASLEGRVKRVTDKPLILINNYIGDPKLDTLFNQLTAEHKH</sequence>
<accession>P69827</accession>
<accession>P32059</accession>
<evidence type="ECO:0000250" key="1">
    <source>
        <dbReference type="UniProtKB" id="P00550"/>
    </source>
</evidence>
<evidence type="ECO:0000250" key="2">
    <source>
        <dbReference type="UniProtKB" id="P28008"/>
    </source>
</evidence>
<evidence type="ECO:0000250" key="3">
    <source>
        <dbReference type="UniProtKB" id="P69826"/>
    </source>
</evidence>
<evidence type="ECO:0000255" key="4">
    <source>
        <dbReference type="PROSITE-ProRule" id="PRU00422"/>
    </source>
</evidence>
<evidence type="ECO:0000255" key="5">
    <source>
        <dbReference type="PROSITE-ProRule" id="PRU00427"/>
    </source>
</evidence>
<comment type="function">
    <text evidence="2">The phosphoenolpyruvate-dependent sugar phosphotransferase system (sugar PTS), a major carbohydrate active transport system, catalyzes the phosphorylation of incoming sugar substrates concomitantly with their translocation across the cell membrane. The enzyme II CmtAB PTS system is involved in D-mannitol transport.</text>
</comment>
<comment type="catalytic activity">
    <reaction evidence="1 2">
        <text>D-mannitol(out) + N(pros)-phospho-L-histidyl-[protein] = D-mannitol 1-phosphate(in) + L-histidyl-[protein]</text>
        <dbReference type="Rhea" id="RHEA:33363"/>
        <dbReference type="Rhea" id="RHEA-COMP:9745"/>
        <dbReference type="Rhea" id="RHEA-COMP:9746"/>
        <dbReference type="ChEBI" id="CHEBI:16899"/>
        <dbReference type="ChEBI" id="CHEBI:29979"/>
        <dbReference type="ChEBI" id="CHEBI:61381"/>
        <dbReference type="ChEBI" id="CHEBI:64837"/>
        <dbReference type="EC" id="2.7.1.197"/>
    </reaction>
</comment>
<comment type="subcellular location">
    <subcellularLocation>
        <location evidence="5">Cell inner membrane</location>
        <topology evidence="5">Multi-pass membrane protein</topology>
    </subcellularLocation>
</comment>
<comment type="domain">
    <text evidence="5">The EIIC type-2 domain forms the PTS system translocation channel and contains the specific substrate-binding site.</text>
</comment>
<comment type="domain">
    <text evidence="4">The PTS EIIB type-2 domain is phosphorylated by phospho-EIIA on a cysteinyl residue. Then, it transfers the phosphoryl group to the sugar substrate concomitantly with the sugar uptake processed by the PTS EIIC type-2 domain.</text>
</comment>
<dbReference type="EC" id="2.7.1.197" evidence="1 2"/>
<dbReference type="EMBL" id="AE005174">
    <property type="protein sequence ID" value="AAG58063.1"/>
    <property type="molecule type" value="Genomic_DNA"/>
</dbReference>
<dbReference type="EMBL" id="BA000007">
    <property type="protein sequence ID" value="BAB37231.1"/>
    <property type="molecule type" value="Genomic_DNA"/>
</dbReference>
<dbReference type="PIR" id="H91104">
    <property type="entry name" value="H91104"/>
</dbReference>
<dbReference type="RefSeq" id="NP_311835.1">
    <property type="nucleotide sequence ID" value="NC_002695.1"/>
</dbReference>
<dbReference type="RefSeq" id="WP_000428805.1">
    <property type="nucleotide sequence ID" value="NZ_VOAI01000003.1"/>
</dbReference>
<dbReference type="SMR" id="P69827"/>
<dbReference type="STRING" id="155864.Z4277"/>
<dbReference type="GeneID" id="75173039"/>
<dbReference type="GeneID" id="916373"/>
<dbReference type="KEGG" id="ece:Z4277"/>
<dbReference type="KEGG" id="ecs:ECs_3808"/>
<dbReference type="PATRIC" id="fig|386585.9.peg.3975"/>
<dbReference type="eggNOG" id="COG2213">
    <property type="taxonomic scope" value="Bacteria"/>
</dbReference>
<dbReference type="HOGENOM" id="CLU_028721_2_0_6"/>
<dbReference type="OMA" id="PAAMIIH"/>
<dbReference type="Proteomes" id="UP000000558">
    <property type="component" value="Chromosome"/>
</dbReference>
<dbReference type="Proteomes" id="UP000002519">
    <property type="component" value="Chromosome"/>
</dbReference>
<dbReference type="GO" id="GO:0005886">
    <property type="term" value="C:plasma membrane"/>
    <property type="evidence" value="ECO:0007669"/>
    <property type="project" value="UniProtKB-SubCell"/>
</dbReference>
<dbReference type="GO" id="GO:0016301">
    <property type="term" value="F:kinase activity"/>
    <property type="evidence" value="ECO:0007669"/>
    <property type="project" value="UniProtKB-KW"/>
</dbReference>
<dbReference type="GO" id="GO:0022872">
    <property type="term" value="F:protein-N(PI)-phosphohistidine-mannitol phosphotransferase system transmembrane transporter activity"/>
    <property type="evidence" value="ECO:0007669"/>
    <property type="project" value="InterPro"/>
</dbReference>
<dbReference type="GO" id="GO:0090563">
    <property type="term" value="F:protein-phosphocysteine-sugar phosphotransferase activity"/>
    <property type="evidence" value="ECO:0007669"/>
    <property type="project" value="TreeGrafter"/>
</dbReference>
<dbReference type="GO" id="GO:0009401">
    <property type="term" value="P:phosphoenolpyruvate-dependent sugar phosphotransferase system"/>
    <property type="evidence" value="ECO:0007669"/>
    <property type="project" value="UniProtKB-KW"/>
</dbReference>
<dbReference type="CDD" id="cd05567">
    <property type="entry name" value="PTS_IIB_mannitol"/>
    <property type="match status" value="1"/>
</dbReference>
<dbReference type="FunFam" id="3.40.50.2300:FF:000047">
    <property type="entry name" value="PTS system mannitol-specific transporter subunit IICBA"/>
    <property type="match status" value="1"/>
</dbReference>
<dbReference type="Gene3D" id="3.40.50.2300">
    <property type="match status" value="1"/>
</dbReference>
<dbReference type="InterPro" id="IPR036095">
    <property type="entry name" value="PTS_EIIB-like_sf"/>
</dbReference>
<dbReference type="InterPro" id="IPR013011">
    <property type="entry name" value="PTS_EIIB_2"/>
</dbReference>
<dbReference type="InterPro" id="IPR003501">
    <property type="entry name" value="PTS_EIIB_2/3"/>
</dbReference>
<dbReference type="InterPro" id="IPR029503">
    <property type="entry name" value="PTS_EIIB_mannitol"/>
</dbReference>
<dbReference type="InterPro" id="IPR003352">
    <property type="entry name" value="PTS_EIIC"/>
</dbReference>
<dbReference type="InterPro" id="IPR013014">
    <property type="entry name" value="PTS_EIIC_2"/>
</dbReference>
<dbReference type="InterPro" id="IPR004718">
    <property type="entry name" value="PTS_IIC_mtl"/>
</dbReference>
<dbReference type="InterPro" id="IPR050893">
    <property type="entry name" value="Sugar_PTS"/>
</dbReference>
<dbReference type="NCBIfam" id="TIGR00851">
    <property type="entry name" value="mtlA"/>
    <property type="match status" value="1"/>
</dbReference>
<dbReference type="NCBIfam" id="NF011663">
    <property type="entry name" value="PRK15083.1"/>
    <property type="match status" value="1"/>
</dbReference>
<dbReference type="PANTHER" id="PTHR30181">
    <property type="entry name" value="MANNITOL PERMEASE IIC COMPONENT"/>
    <property type="match status" value="1"/>
</dbReference>
<dbReference type="PANTHER" id="PTHR30181:SF2">
    <property type="entry name" value="PTS SYSTEM MANNITOL-SPECIFIC EIICBA COMPONENT"/>
    <property type="match status" value="1"/>
</dbReference>
<dbReference type="Pfam" id="PF02378">
    <property type="entry name" value="PTS_EIIC"/>
    <property type="match status" value="1"/>
</dbReference>
<dbReference type="Pfam" id="PF02302">
    <property type="entry name" value="PTS_IIB"/>
    <property type="match status" value="1"/>
</dbReference>
<dbReference type="SUPFAM" id="SSF52794">
    <property type="entry name" value="PTS system IIB component-like"/>
    <property type="match status" value="1"/>
</dbReference>
<dbReference type="PROSITE" id="PS51099">
    <property type="entry name" value="PTS_EIIB_TYPE_2"/>
    <property type="match status" value="1"/>
</dbReference>
<dbReference type="PROSITE" id="PS51104">
    <property type="entry name" value="PTS_EIIC_TYPE_2"/>
    <property type="match status" value="1"/>
</dbReference>
<protein>
    <recommendedName>
        <fullName evidence="3">PTS system mannitol-specific cryptic EIICB component</fullName>
    </recommendedName>
    <alternativeName>
        <fullName evidence="2">EIICB-Mtl</fullName>
        <shortName evidence="2">EII-Mtl</shortName>
    </alternativeName>
    <domain>
        <recommendedName>
            <fullName evidence="2">Mannitol permease IIC component</fullName>
        </recommendedName>
        <alternativeName>
            <fullName evidence="2">PTS system mannitol-specific EIIC component</fullName>
        </alternativeName>
    </domain>
    <domain>
        <recommendedName>
            <fullName evidence="2">Mannitol-specific phosphotransferase enzyme IIB component</fullName>
            <ecNumber evidence="1 2">2.7.1.197</ecNumber>
        </recommendedName>
        <alternativeName>
            <fullName evidence="2">PTS system mannitol-specific EIIB component</fullName>
        </alternativeName>
    </domain>
</protein>
<organism>
    <name type="scientific">Escherichia coli O157:H7</name>
    <dbReference type="NCBI Taxonomy" id="83334"/>
    <lineage>
        <taxon>Bacteria</taxon>
        <taxon>Pseudomonadati</taxon>
        <taxon>Pseudomonadota</taxon>
        <taxon>Gammaproteobacteria</taxon>
        <taxon>Enterobacterales</taxon>
        <taxon>Enterobacteriaceae</taxon>
        <taxon>Escherichia</taxon>
    </lineage>
</organism>
<keyword id="KW-0997">Cell inner membrane</keyword>
<keyword id="KW-1003">Cell membrane</keyword>
<keyword id="KW-0418">Kinase</keyword>
<keyword id="KW-0472">Membrane</keyword>
<keyword id="KW-0597">Phosphoprotein</keyword>
<keyword id="KW-0598">Phosphotransferase system</keyword>
<keyword id="KW-1185">Reference proteome</keyword>
<keyword id="KW-0762">Sugar transport</keyword>
<keyword id="KW-0808">Transferase</keyword>
<keyword id="KW-0812">Transmembrane</keyword>
<keyword id="KW-1133">Transmembrane helix</keyword>
<keyword id="KW-0813">Transport</keyword>
<reference key="1">
    <citation type="journal article" date="2001" name="Nature">
        <title>Genome sequence of enterohaemorrhagic Escherichia coli O157:H7.</title>
        <authorList>
            <person name="Perna N.T."/>
            <person name="Plunkett G. III"/>
            <person name="Burland V."/>
            <person name="Mau B."/>
            <person name="Glasner J.D."/>
            <person name="Rose D.J."/>
            <person name="Mayhew G.F."/>
            <person name="Evans P.S."/>
            <person name="Gregor J."/>
            <person name="Kirkpatrick H.A."/>
            <person name="Posfai G."/>
            <person name="Hackett J."/>
            <person name="Klink S."/>
            <person name="Boutin A."/>
            <person name="Shao Y."/>
            <person name="Miller L."/>
            <person name="Grotbeck E.J."/>
            <person name="Davis N.W."/>
            <person name="Lim A."/>
            <person name="Dimalanta E.T."/>
            <person name="Potamousis K."/>
            <person name="Apodaca J."/>
            <person name="Anantharaman T.S."/>
            <person name="Lin J."/>
            <person name="Yen G."/>
            <person name="Schwartz D.C."/>
            <person name="Welch R.A."/>
            <person name="Blattner F.R."/>
        </authorList>
    </citation>
    <scope>NUCLEOTIDE SEQUENCE [LARGE SCALE GENOMIC DNA]</scope>
    <source>
        <strain>O157:H7 / EDL933 / ATCC 700927 / EHEC</strain>
    </source>
</reference>
<reference key="2">
    <citation type="journal article" date="2001" name="DNA Res.">
        <title>Complete genome sequence of enterohemorrhagic Escherichia coli O157:H7 and genomic comparison with a laboratory strain K-12.</title>
        <authorList>
            <person name="Hayashi T."/>
            <person name="Makino K."/>
            <person name="Ohnishi M."/>
            <person name="Kurokawa K."/>
            <person name="Ishii K."/>
            <person name="Yokoyama K."/>
            <person name="Han C.-G."/>
            <person name="Ohtsubo E."/>
            <person name="Nakayama K."/>
            <person name="Murata T."/>
            <person name="Tanaka M."/>
            <person name="Tobe T."/>
            <person name="Iida T."/>
            <person name="Takami H."/>
            <person name="Honda T."/>
            <person name="Sasakawa C."/>
            <person name="Ogasawara N."/>
            <person name="Yasunaga T."/>
            <person name="Kuhara S."/>
            <person name="Shiba T."/>
            <person name="Hattori M."/>
            <person name="Shinagawa H."/>
        </authorList>
    </citation>
    <scope>NUCLEOTIDE SEQUENCE [LARGE SCALE GENOMIC DNA]</scope>
    <source>
        <strain>O157:H7 / Sakai / RIMD 0509952 / EHEC</strain>
    </source>
</reference>
<proteinExistence type="inferred from homology"/>
<feature type="chain" id="PRO_0000186680" description="PTS system mannitol-specific cryptic EIICB component">
    <location>
        <begin position="1"/>
        <end position="462"/>
    </location>
</feature>
<feature type="topological domain" description="Cytoplasmic" evidence="1">
    <location>
        <begin position="1"/>
        <end position="24"/>
    </location>
</feature>
<feature type="transmembrane region" description="Helical" evidence="1">
    <location>
        <begin position="25"/>
        <end position="46"/>
    </location>
</feature>
<feature type="topological domain" description="Periplasmic" evidence="1">
    <location>
        <begin position="47"/>
        <end position="50"/>
    </location>
</feature>
<feature type="transmembrane region" description="Helical" evidence="1">
    <location>
        <begin position="51"/>
        <end position="71"/>
    </location>
</feature>
<feature type="topological domain" description="Cytoplasmic" evidence="1">
    <location>
        <begin position="72"/>
        <end position="134"/>
    </location>
</feature>
<feature type="transmembrane region" description="Helical" evidence="1">
    <location>
        <begin position="135"/>
        <end position="156"/>
    </location>
</feature>
<feature type="topological domain" description="Periplasmic" evidence="1">
    <location>
        <begin position="157"/>
        <end position="165"/>
    </location>
</feature>
<feature type="transmembrane region" description="Helical" evidence="1">
    <location>
        <begin position="166"/>
        <end position="186"/>
    </location>
</feature>
<feature type="topological domain" description="Cytoplasmic" evidence="1">
    <location>
        <begin position="187"/>
        <end position="273"/>
    </location>
</feature>
<feature type="transmembrane region" description="Helical" evidence="1">
    <location>
        <begin position="274"/>
        <end position="293"/>
    </location>
</feature>
<feature type="topological domain" description="Periplasmic" evidence="1">
    <location>
        <begin position="294"/>
        <end position="313"/>
    </location>
</feature>
<feature type="transmembrane region" description="Helical" evidence="1">
    <location>
        <begin position="314"/>
        <end position="335"/>
    </location>
</feature>
<feature type="topological domain" description="Cytoplasmic" evidence="1">
    <location>
        <begin position="336"/>
        <end position="462"/>
    </location>
</feature>
<feature type="domain" description="PTS EIIC type-2" evidence="5">
    <location>
        <begin position="13"/>
        <end position="344"/>
    </location>
</feature>
<feature type="domain" description="PTS EIIB type-2" evidence="4">
    <location>
        <begin position="371"/>
        <end position="461"/>
    </location>
</feature>
<feature type="active site" description="Phosphocysteine intermediate; for EIIB activity" evidence="1 2">
    <location>
        <position position="377"/>
    </location>
</feature>
<feature type="modified residue" description="Phosphocysteine; by EIIA" evidence="1 2 4">
    <location>
        <position position="377"/>
    </location>
</feature>
<name>PTMCB_ECO57</name>
<gene>
    <name type="primary">cmtA</name>
    <name type="ordered locus">Z4277</name>
    <name type="ordered locus">ECs3808</name>
</gene>